<evidence type="ECO:0000255" key="1">
    <source>
        <dbReference type="HAMAP-Rule" id="MF_00366"/>
    </source>
</evidence>
<organism>
    <name type="scientific">Desulfatibacillum aliphaticivorans</name>
    <dbReference type="NCBI Taxonomy" id="218208"/>
    <lineage>
        <taxon>Bacteria</taxon>
        <taxon>Pseudomonadati</taxon>
        <taxon>Thermodesulfobacteriota</taxon>
        <taxon>Desulfobacteria</taxon>
        <taxon>Desulfobacterales</taxon>
        <taxon>Desulfatibacillaceae</taxon>
        <taxon>Desulfatibacillum</taxon>
    </lineage>
</organism>
<keyword id="KW-0240">DNA-directed RNA polymerase</keyword>
<keyword id="KW-0548">Nucleotidyltransferase</keyword>
<keyword id="KW-1185">Reference proteome</keyword>
<keyword id="KW-0804">Transcription</keyword>
<keyword id="KW-0808">Transferase</keyword>
<sequence>MARITIEDCLKRVPNRFLLVHMAAKRVRQMREGSEYLVSSPKNEDIVVALREIAADKVYVSDNMPDEL</sequence>
<reference key="1">
    <citation type="journal article" date="2012" name="Environ. Microbiol.">
        <title>The genome sequence of Desulfatibacillum alkenivorans AK-01: a blueprint for anaerobic alkane oxidation.</title>
        <authorList>
            <person name="Callaghan A.V."/>
            <person name="Morris B.E."/>
            <person name="Pereira I.A."/>
            <person name="McInerney M.J."/>
            <person name="Austin R.N."/>
            <person name="Groves J.T."/>
            <person name="Kukor J.J."/>
            <person name="Suflita J.M."/>
            <person name="Young L.Y."/>
            <person name="Zylstra G.J."/>
            <person name="Wawrik B."/>
        </authorList>
    </citation>
    <scope>NUCLEOTIDE SEQUENCE [LARGE SCALE GENOMIC DNA]</scope>
    <source>
        <strain>AK-01</strain>
    </source>
</reference>
<proteinExistence type="inferred from homology"/>
<comment type="function">
    <text evidence="1">Promotes RNA polymerase assembly. Latches the N- and C-terminal regions of the beta' subunit thereby facilitating its interaction with the beta and alpha subunits.</text>
</comment>
<comment type="catalytic activity">
    <reaction evidence="1">
        <text>RNA(n) + a ribonucleoside 5'-triphosphate = RNA(n+1) + diphosphate</text>
        <dbReference type="Rhea" id="RHEA:21248"/>
        <dbReference type="Rhea" id="RHEA-COMP:14527"/>
        <dbReference type="Rhea" id="RHEA-COMP:17342"/>
        <dbReference type="ChEBI" id="CHEBI:33019"/>
        <dbReference type="ChEBI" id="CHEBI:61557"/>
        <dbReference type="ChEBI" id="CHEBI:140395"/>
        <dbReference type="EC" id="2.7.7.6"/>
    </reaction>
</comment>
<comment type="subunit">
    <text evidence="1">The RNAP catalytic core consists of 2 alpha, 1 beta, 1 beta' and 1 omega subunit. When a sigma factor is associated with the core the holoenzyme is formed, which can initiate transcription.</text>
</comment>
<comment type="similarity">
    <text evidence="1">Belongs to the RNA polymerase subunit omega family.</text>
</comment>
<dbReference type="EC" id="2.7.7.6" evidence="1"/>
<dbReference type="EMBL" id="CP001322">
    <property type="protein sequence ID" value="ACL02941.1"/>
    <property type="molecule type" value="Genomic_DNA"/>
</dbReference>
<dbReference type="RefSeq" id="WP_012610377.1">
    <property type="nucleotide sequence ID" value="NC_011768.1"/>
</dbReference>
<dbReference type="SMR" id="B8F9J5"/>
<dbReference type="KEGG" id="dal:Dalk_1238"/>
<dbReference type="eggNOG" id="COG1758">
    <property type="taxonomic scope" value="Bacteria"/>
</dbReference>
<dbReference type="HOGENOM" id="CLU_125406_5_1_7"/>
<dbReference type="Proteomes" id="UP000000739">
    <property type="component" value="Chromosome"/>
</dbReference>
<dbReference type="GO" id="GO:0000428">
    <property type="term" value="C:DNA-directed RNA polymerase complex"/>
    <property type="evidence" value="ECO:0007669"/>
    <property type="project" value="UniProtKB-KW"/>
</dbReference>
<dbReference type="GO" id="GO:0003677">
    <property type="term" value="F:DNA binding"/>
    <property type="evidence" value="ECO:0007669"/>
    <property type="project" value="UniProtKB-UniRule"/>
</dbReference>
<dbReference type="GO" id="GO:0003899">
    <property type="term" value="F:DNA-directed RNA polymerase activity"/>
    <property type="evidence" value="ECO:0007669"/>
    <property type="project" value="UniProtKB-UniRule"/>
</dbReference>
<dbReference type="GO" id="GO:0006351">
    <property type="term" value="P:DNA-templated transcription"/>
    <property type="evidence" value="ECO:0007669"/>
    <property type="project" value="UniProtKB-UniRule"/>
</dbReference>
<dbReference type="Gene3D" id="3.90.940.10">
    <property type="match status" value="1"/>
</dbReference>
<dbReference type="HAMAP" id="MF_00366">
    <property type="entry name" value="RNApol_bact_RpoZ"/>
    <property type="match status" value="1"/>
</dbReference>
<dbReference type="InterPro" id="IPR003716">
    <property type="entry name" value="DNA-dir_RNA_pol_omega"/>
</dbReference>
<dbReference type="InterPro" id="IPR006110">
    <property type="entry name" value="Pol_omega/Rpo6/RPB6"/>
</dbReference>
<dbReference type="InterPro" id="IPR036161">
    <property type="entry name" value="RPB6/omega-like_sf"/>
</dbReference>
<dbReference type="NCBIfam" id="TIGR00690">
    <property type="entry name" value="rpoZ"/>
    <property type="match status" value="1"/>
</dbReference>
<dbReference type="PANTHER" id="PTHR34476">
    <property type="entry name" value="DNA-DIRECTED RNA POLYMERASE SUBUNIT OMEGA"/>
    <property type="match status" value="1"/>
</dbReference>
<dbReference type="PANTHER" id="PTHR34476:SF1">
    <property type="entry name" value="DNA-DIRECTED RNA POLYMERASE SUBUNIT OMEGA"/>
    <property type="match status" value="1"/>
</dbReference>
<dbReference type="Pfam" id="PF01192">
    <property type="entry name" value="RNA_pol_Rpb6"/>
    <property type="match status" value="1"/>
</dbReference>
<dbReference type="SMART" id="SM01409">
    <property type="entry name" value="RNA_pol_Rpb6"/>
    <property type="match status" value="1"/>
</dbReference>
<dbReference type="SUPFAM" id="SSF63562">
    <property type="entry name" value="RPB6/omega subunit-like"/>
    <property type="match status" value="1"/>
</dbReference>
<name>RPOZ_DESAL</name>
<feature type="chain" id="PRO_1000121211" description="DNA-directed RNA polymerase subunit omega">
    <location>
        <begin position="1"/>
        <end position="68"/>
    </location>
</feature>
<protein>
    <recommendedName>
        <fullName evidence="1">DNA-directed RNA polymerase subunit omega</fullName>
        <shortName evidence="1">RNAP omega subunit</shortName>
        <ecNumber evidence="1">2.7.7.6</ecNumber>
    </recommendedName>
    <alternativeName>
        <fullName evidence="1">RNA polymerase omega subunit</fullName>
    </alternativeName>
    <alternativeName>
        <fullName evidence="1">Transcriptase subunit omega</fullName>
    </alternativeName>
</protein>
<gene>
    <name evidence="1" type="primary">rpoZ</name>
    <name type="ordered locus">Dalk_1238</name>
</gene>
<accession>B8F9J5</accession>